<reference key="1">
    <citation type="journal article" date="2011" name="Nature">
        <title>A high-resolution map of human evolutionary constraint using 29 mammals.</title>
        <authorList>
            <person name="Lindblad-Toh K."/>
            <person name="Garber M."/>
            <person name="Zuk O."/>
            <person name="Lin M.F."/>
            <person name="Parker B.J."/>
            <person name="Washietl S."/>
            <person name="Kheradpour P."/>
            <person name="Ernst J."/>
            <person name="Jordan G."/>
            <person name="Mauceli E."/>
            <person name="Ward L.D."/>
            <person name="Lowe C.B."/>
            <person name="Holloway A.K."/>
            <person name="Clamp M."/>
            <person name="Gnerre S."/>
            <person name="Alfoldi J."/>
            <person name="Beal K."/>
            <person name="Chang J."/>
            <person name="Clawson H."/>
            <person name="Cuff J."/>
            <person name="Di Palma F."/>
            <person name="Fitzgerald S."/>
            <person name="Flicek P."/>
            <person name="Guttman M."/>
            <person name="Hubisz M.J."/>
            <person name="Jaffe D.B."/>
            <person name="Jungreis I."/>
            <person name="Kent W.J."/>
            <person name="Kostka D."/>
            <person name="Lara M."/>
            <person name="Martins A.L."/>
            <person name="Massingham T."/>
            <person name="Moltke I."/>
            <person name="Raney B.J."/>
            <person name="Rasmussen M.D."/>
            <person name="Robinson J."/>
            <person name="Stark A."/>
            <person name="Vilella A.J."/>
            <person name="Wen J."/>
            <person name="Xie X."/>
            <person name="Zody M.C."/>
            <person name="Baldwin J."/>
            <person name="Bloom T."/>
            <person name="Chin C.W."/>
            <person name="Heiman D."/>
            <person name="Nicol R."/>
            <person name="Nusbaum C."/>
            <person name="Young S."/>
            <person name="Wilkinson J."/>
            <person name="Worley K.C."/>
            <person name="Kovar C.L."/>
            <person name="Muzny D.M."/>
            <person name="Gibbs R.A."/>
            <person name="Cree A."/>
            <person name="Dihn H.H."/>
            <person name="Fowler G."/>
            <person name="Jhangiani S."/>
            <person name="Joshi V."/>
            <person name="Lee S."/>
            <person name="Lewis L.R."/>
            <person name="Nazareth L.V."/>
            <person name="Okwuonu G."/>
            <person name="Santibanez J."/>
            <person name="Warren W.C."/>
            <person name="Mardis E.R."/>
            <person name="Weinstock G.M."/>
            <person name="Wilson R.K."/>
            <person name="Delehaunty K."/>
            <person name="Dooling D."/>
            <person name="Fronik C."/>
            <person name="Fulton L."/>
            <person name="Fulton B."/>
            <person name="Graves T."/>
            <person name="Minx P."/>
            <person name="Sodergren E."/>
            <person name="Birney E."/>
            <person name="Margulies E.H."/>
            <person name="Herrero J."/>
            <person name="Green E.D."/>
            <person name="Haussler D."/>
            <person name="Siepel A."/>
            <person name="Goldman N."/>
            <person name="Pollard K.S."/>
            <person name="Pedersen J.S."/>
            <person name="Lander E.S."/>
            <person name="Kellis M."/>
        </authorList>
    </citation>
    <scope>NUCLEOTIDE SEQUENCE [LARGE SCALE GENOMIC DNA]</scope>
    <source>
        <strain>Thorbecke</strain>
    </source>
</reference>
<reference evidence="10 11" key="2">
    <citation type="journal article" date="2015" name="Nature">
        <title>Structural basis for stop codon recognition in eukaryotes.</title>
        <authorList>
            <person name="Brown A."/>
            <person name="Shao S."/>
            <person name="Murray J."/>
            <person name="Hegde R.S."/>
            <person name="Ramakrishnan V."/>
        </authorList>
    </citation>
    <scope>STRUCTURE BY ELECTRON MICROSCOPY (3.45 ANGSTROMS) OF 2-242 OF RIBOSOME</scope>
    <scope>FUNCTION</scope>
    <scope>SUBCELLULAR LOCATION</scope>
    <scope>SUBUNIT</scope>
</reference>
<reference evidence="12 13" key="3">
    <citation type="journal article" date="2016" name="Cell">
        <title>Decoding mammalian ribosome-mRNA states by translational GTPase complexes.</title>
        <authorList>
            <person name="Shao S."/>
            <person name="Murray J."/>
            <person name="Brown A."/>
            <person name="Taunton J."/>
            <person name="Ramakrishnan V."/>
            <person name="Hegde R.S."/>
        </authorList>
    </citation>
    <scope>STRUCTURE BY ELECTRON MICROSCOPY (3.31 ANGSTROMS) OF 1-242 OF RIBOSOME</scope>
    <scope>FUNCTION</scope>
    <scope>SUBCELLULAR LOCATION</scope>
    <scope>SUBUNIT</scope>
</reference>
<reference evidence="14 15" key="4">
    <citation type="journal article" date="2018" name="Elife">
        <title>Dual tRNA mimicry in the Cricket paralysis virus IRES uncovers an unexpected similarity with the Hepatitis C Virus IRES.</title>
        <authorList>
            <person name="Pisareva V.P."/>
            <person name="Pisarev A.V."/>
            <person name="Fernandez I.S."/>
        </authorList>
    </citation>
    <scope>STRUCTURE BY ELECTRON MICROSCOPY (3.20 ANGSTROMS) OF RIBOSOME</scope>
    <scope>SUBCELLULAR LOCATION</scope>
    <scope>SUBUNIT</scope>
</reference>
<reference evidence="18 19" key="5">
    <citation type="journal article" date="2019" name="Elife">
        <title>Structural and mutational analysis of the ribosome-arresting human XBP1u.</title>
        <authorList>
            <person name="Shanmuganathan V."/>
            <person name="Schiller N."/>
            <person name="Magoulopoulou A."/>
            <person name="Cheng J."/>
            <person name="Braunger K."/>
            <person name="Cymer F."/>
            <person name="Berninghausen O."/>
            <person name="Beatrix B."/>
            <person name="Kohno K."/>
            <person name="von Heijne G."/>
            <person name="Beckmann R."/>
        </authorList>
    </citation>
    <scope>STRUCTURE BY ELECTRON MICROSCOPY (3.00 ANGSTROMS) OF 3-342 OF RIBOSOME</scope>
    <scope>SUBCELLULAR LOCATION</scope>
    <scope>SUBUNIT</scope>
</reference>
<reference evidence="16 17" key="6">
    <citation type="journal article" date="2019" name="EMBO J.">
        <title>The Israeli acute paralysis virus IRES captures host ribosomes by mimicking a ribosomal state with hybrid tRNAs.</title>
        <authorList>
            <person name="Acosta-Reyes F."/>
            <person name="Neupane R."/>
            <person name="Frank J."/>
            <person name="Fernandez I.S."/>
        </authorList>
    </citation>
    <scope>STRUCTURE BY ELECTRON MICROSCOPY (3.10 ANGSTROMS) OF RIBOSOME</scope>
    <scope>SUBCELLULAR LOCATION</scope>
    <scope>SUBUNIT</scope>
</reference>
<organism>
    <name type="scientific">Oryctolagus cuniculus</name>
    <name type="common">Rabbit</name>
    <dbReference type="NCBI Taxonomy" id="9986"/>
    <lineage>
        <taxon>Eukaryota</taxon>
        <taxon>Metazoa</taxon>
        <taxon>Chordata</taxon>
        <taxon>Craniata</taxon>
        <taxon>Vertebrata</taxon>
        <taxon>Euteleostomi</taxon>
        <taxon>Mammalia</taxon>
        <taxon>Eutheria</taxon>
        <taxon>Euarchontoglires</taxon>
        <taxon>Glires</taxon>
        <taxon>Lagomorpha</taxon>
        <taxon>Leporidae</taxon>
        <taxon>Oryctolagus</taxon>
    </lineage>
</organism>
<feature type="chain" id="PRO_0000460096" description="Large ribosomal subunit protein eL8">
    <location>
        <begin position="1"/>
        <end position="319"/>
    </location>
</feature>
<feature type="modified residue" description="N6-acetyllysine" evidence="2">
    <location>
        <position position="87"/>
    </location>
</feature>
<feature type="modified residue" description="N6-acetyllysine; alternate" evidence="2">
    <location>
        <position position="150"/>
    </location>
</feature>
<feature type="modified residue" description="N6-acetyllysine" evidence="2">
    <location>
        <position position="270"/>
    </location>
</feature>
<feature type="cross-link" description="Glycyl lysine isopeptide (Lys-Gly) (interchain with G-Cter in SUMO2)" evidence="2">
    <location>
        <position position="101"/>
    </location>
</feature>
<feature type="cross-link" description="Glycyl lysine isopeptide (Lys-Gly) (interchain with G-Cter in SUMO2); alternate" evidence="2">
    <location>
        <position position="150"/>
    </location>
</feature>
<feature type="cross-link" description="Glycyl lysine isopeptide (Lys-Gly) (interchain with G-Cter in SUMO2)" evidence="2">
    <location>
        <position position="178"/>
    </location>
</feature>
<feature type="cross-link" description="Glycyl lysine isopeptide (Lys-Gly) (interchain with G-Cter in SUMO2)" evidence="2">
    <location>
        <position position="298"/>
    </location>
</feature>
<gene>
    <name type="primary">RPL7A</name>
</gene>
<comment type="function">
    <text evidence="4 5">Component of the large ribosomal subunit (PubMed:26245381, PubMed:27863242). The ribosome is a large ribonucleoprotein complex responsible for the synthesis of proteins in the cell (PubMed:26245381, PubMed:27863242).</text>
</comment>
<comment type="subunit">
    <text evidence="1 2 4 5 6 7 8">Component of the large ribosomal subunit (PubMed:26245381, PubMed:27863242, PubMed:29856316, PubMed:31246176, PubMed:31609474). Interacts with CRY1 (By similarity). Interacts with DICER1, AGO2, TARBP2, MOV10 and EIF6; they form a large RNA-induced silencing complex (RISC) (By similarity).</text>
</comment>
<comment type="subcellular location">
    <subcellularLocation>
        <location evidence="4 5 6 7 8">Cytoplasm</location>
    </subcellularLocation>
</comment>
<comment type="similarity">
    <text evidence="9">Belongs to the eukaryotic ribosomal protein eL8 family.</text>
</comment>
<keyword id="KW-0002">3D-structure</keyword>
<keyword id="KW-0007">Acetylation</keyword>
<keyword id="KW-0963">Cytoplasm</keyword>
<keyword id="KW-1017">Isopeptide bond</keyword>
<keyword id="KW-1185">Reference proteome</keyword>
<keyword id="KW-0687">Ribonucleoprotein</keyword>
<keyword id="KW-0689">Ribosomal protein</keyword>
<keyword id="KW-0832">Ubl conjugation</keyword>
<name>RL7A_RABIT</name>
<sequence length="319" mass="36199">MSSYRLGYCMKEERHNLVLCLWSQSPGILNSKCLWPFTNIHLLVGALPREGAGGAWGGGRSEQLPTCSTTHHDFTWDKKVVNPLFEKRPKNFGIGQDIQPKRDLTRFVKWPRYIRLQRQRAILYKRLKVPPAINQFTQVLDRQTATQLLKLAHKYRPETKQEKKQRLLARAEKKAAGKGDVPTKRPPVLRAGVNTVTTLVENKKAQLVVIAHDVDPIELVVFLPALCRKMGVPYCILKGKARLCRLVHRKTCTTVAFTQVNSEDKGALAKLVEAIRTNYNDRYDEIRRHWGGNVLGPKSVARIAKLEKAKAKELATKLG</sequence>
<dbReference type="RefSeq" id="XP_008273621.1">
    <property type="nucleotide sequence ID" value="XM_008275399.2"/>
</dbReference>
<dbReference type="PDB" id="3JAG">
    <property type="method" value="EM"/>
    <property type="resolution" value="3.65 A"/>
    <property type="chains" value="G=79-319"/>
</dbReference>
<dbReference type="PDB" id="3JAH">
    <property type="method" value="EM"/>
    <property type="resolution" value="3.45 A"/>
    <property type="chains" value="G=79-319"/>
</dbReference>
<dbReference type="PDB" id="3JAI">
    <property type="method" value="EM"/>
    <property type="resolution" value="3.65 A"/>
    <property type="chains" value="G=79-319"/>
</dbReference>
<dbReference type="PDB" id="5LZS">
    <property type="method" value="EM"/>
    <property type="resolution" value="3.31 A"/>
    <property type="chains" value="G=1-319"/>
</dbReference>
<dbReference type="PDB" id="5LZT">
    <property type="method" value="EM"/>
    <property type="resolution" value="3.65 A"/>
    <property type="chains" value="G=1-319"/>
</dbReference>
<dbReference type="PDB" id="5LZU">
    <property type="method" value="EM"/>
    <property type="resolution" value="3.75 A"/>
    <property type="chains" value="G=78-319"/>
</dbReference>
<dbReference type="PDB" id="5LZV">
    <property type="method" value="EM"/>
    <property type="resolution" value="3.35 A"/>
    <property type="chains" value="G=1-319"/>
</dbReference>
<dbReference type="PDB" id="5LZW">
    <property type="method" value="EM"/>
    <property type="resolution" value="3.53 A"/>
    <property type="chains" value="G=1-319"/>
</dbReference>
<dbReference type="PDB" id="5LZX">
    <property type="method" value="EM"/>
    <property type="resolution" value="3.67 A"/>
    <property type="chains" value="G=1-319"/>
</dbReference>
<dbReference type="PDB" id="5LZY">
    <property type="method" value="EM"/>
    <property type="resolution" value="3.99 A"/>
    <property type="chains" value="G=1-319"/>
</dbReference>
<dbReference type="PDB" id="5LZZ">
    <property type="method" value="EM"/>
    <property type="resolution" value="3.47 A"/>
    <property type="chains" value="G=1-319"/>
</dbReference>
<dbReference type="PDB" id="6D90">
    <property type="method" value="EM"/>
    <property type="resolution" value="3.20 A"/>
    <property type="chains" value="G=78-319"/>
</dbReference>
<dbReference type="PDB" id="6D9J">
    <property type="method" value="EM"/>
    <property type="resolution" value="3.20 A"/>
    <property type="chains" value="G=78-319"/>
</dbReference>
<dbReference type="PDB" id="6FTG">
    <property type="method" value="EM"/>
    <property type="resolution" value="9.10 A"/>
    <property type="chains" value="G=79-319"/>
</dbReference>
<dbReference type="PDB" id="6FTI">
    <property type="method" value="EM"/>
    <property type="resolution" value="4.20 A"/>
    <property type="chains" value="G=79-319"/>
</dbReference>
<dbReference type="PDB" id="6FTJ">
    <property type="method" value="EM"/>
    <property type="resolution" value="4.70 A"/>
    <property type="chains" value="G=79-319"/>
</dbReference>
<dbReference type="PDB" id="6P5I">
    <property type="method" value="EM"/>
    <property type="resolution" value="3.10 A"/>
    <property type="chains" value="AG=78-319"/>
</dbReference>
<dbReference type="PDB" id="6P5J">
    <property type="method" value="EM"/>
    <property type="resolution" value="3.10 A"/>
    <property type="chains" value="AG=78-319"/>
</dbReference>
<dbReference type="PDB" id="6P5K">
    <property type="method" value="EM"/>
    <property type="resolution" value="3.10 A"/>
    <property type="chains" value="AG=78-319"/>
</dbReference>
<dbReference type="PDB" id="6P5N">
    <property type="method" value="EM"/>
    <property type="resolution" value="3.20 A"/>
    <property type="chains" value="AG=78-319"/>
</dbReference>
<dbReference type="PDB" id="6R5Q">
    <property type="method" value="EM"/>
    <property type="resolution" value="3.00 A"/>
    <property type="chains" value="G=80-319"/>
</dbReference>
<dbReference type="PDB" id="6R6G">
    <property type="method" value="EM"/>
    <property type="resolution" value="3.70 A"/>
    <property type="chains" value="G=80-319"/>
</dbReference>
<dbReference type="PDB" id="6R6P">
    <property type="method" value="EM"/>
    <property type="resolution" value="3.10 A"/>
    <property type="chains" value="G=79-319"/>
</dbReference>
<dbReference type="PDB" id="6R7Q">
    <property type="method" value="EM"/>
    <property type="resolution" value="3.90 A"/>
    <property type="chains" value="G=80-319"/>
</dbReference>
<dbReference type="PDB" id="7MDZ">
    <property type="method" value="EM"/>
    <property type="resolution" value="3.20 A"/>
    <property type="chains" value="G=1-319"/>
</dbReference>
<dbReference type="PDB" id="7NFX">
    <property type="method" value="EM"/>
    <property type="resolution" value="3.20 A"/>
    <property type="chains" value="G=1-319"/>
</dbReference>
<dbReference type="PDB" id="7NWG">
    <property type="method" value="EM"/>
    <property type="resolution" value="3.80 A"/>
    <property type="chains" value="G3=79-319"/>
</dbReference>
<dbReference type="PDB" id="7NWI">
    <property type="method" value="EM"/>
    <property type="resolution" value="3.13 A"/>
    <property type="chains" value="G=79-319"/>
</dbReference>
<dbReference type="PDB" id="7OBR">
    <property type="method" value="EM"/>
    <property type="resolution" value="2.80 A"/>
    <property type="chains" value="G=1-319"/>
</dbReference>
<dbReference type="PDB" id="7QWQ">
    <property type="method" value="EM"/>
    <property type="resolution" value="2.83 A"/>
    <property type="chains" value="G=1-319"/>
</dbReference>
<dbReference type="PDB" id="7QWR">
    <property type="method" value="EM"/>
    <property type="resolution" value="2.90 A"/>
    <property type="chains" value="G=1-319"/>
</dbReference>
<dbReference type="PDB" id="7QWS">
    <property type="method" value="EM"/>
    <property type="resolution" value="3.40 A"/>
    <property type="chains" value="G=1-319"/>
</dbReference>
<dbReference type="PDB" id="7TM3">
    <property type="method" value="EM"/>
    <property type="resolution" value="3.25 A"/>
    <property type="chains" value="G=1-319"/>
</dbReference>
<dbReference type="PDB" id="7TUT">
    <property type="method" value="EM"/>
    <property type="resolution" value="3.88 A"/>
    <property type="chains" value="G=1-319"/>
</dbReference>
<dbReference type="PDB" id="8B5L">
    <property type="method" value="EM"/>
    <property type="resolution" value="2.86 A"/>
    <property type="chains" value="G=1-319"/>
</dbReference>
<dbReference type="PDB" id="8B6C">
    <property type="method" value="EM"/>
    <property type="resolution" value="2.79 A"/>
    <property type="chains" value="G=1-319"/>
</dbReference>
<dbReference type="PDB" id="8BHF">
    <property type="method" value="EM"/>
    <property type="resolution" value="3.10 A"/>
    <property type="chains" value="p3=80-319"/>
</dbReference>
<dbReference type="PDB" id="8BPO">
    <property type="method" value="EM"/>
    <property type="resolution" value="2.80 A"/>
    <property type="chains" value="G2=1-319"/>
</dbReference>
<dbReference type="PDB" id="8BTK">
    <property type="method" value="EM"/>
    <property type="resolution" value="3.50 A"/>
    <property type="chains" value="BG=78-319"/>
</dbReference>
<dbReference type="PDB" id="8RJB">
    <property type="method" value="EM"/>
    <property type="resolution" value="2.69 A"/>
    <property type="chains" value="G=1-319"/>
</dbReference>
<dbReference type="PDB" id="8RJC">
    <property type="method" value="EM"/>
    <property type="resolution" value="2.90 A"/>
    <property type="chains" value="G=1-319"/>
</dbReference>
<dbReference type="PDB" id="8RJD">
    <property type="method" value="EM"/>
    <property type="resolution" value="2.79 A"/>
    <property type="chains" value="G=1-319"/>
</dbReference>
<dbReference type="PDB" id="8SCB">
    <property type="method" value="EM"/>
    <property type="resolution" value="2.50 A"/>
    <property type="chains" value="G=1-319"/>
</dbReference>
<dbReference type="PDB" id="8VFT">
    <property type="method" value="EM"/>
    <property type="resolution" value="3.30 A"/>
    <property type="chains" value="G=1-319"/>
</dbReference>
<dbReference type="PDB" id="9BDL">
    <property type="method" value="EM"/>
    <property type="resolution" value="2.80 A"/>
    <property type="chains" value="AL08=80-319"/>
</dbReference>
<dbReference type="PDB" id="9BDN">
    <property type="method" value="EM"/>
    <property type="resolution" value="3.10 A"/>
    <property type="chains" value="AL08=80-319"/>
</dbReference>
<dbReference type="PDB" id="9BDP">
    <property type="method" value="EM"/>
    <property type="resolution" value="3.70 A"/>
    <property type="chains" value="AL08=80-319"/>
</dbReference>
<dbReference type="PDBsum" id="3JAG"/>
<dbReference type="PDBsum" id="3JAH"/>
<dbReference type="PDBsum" id="3JAI"/>
<dbReference type="PDBsum" id="5LZS"/>
<dbReference type="PDBsum" id="5LZT"/>
<dbReference type="PDBsum" id="5LZU"/>
<dbReference type="PDBsum" id="5LZV"/>
<dbReference type="PDBsum" id="5LZW"/>
<dbReference type="PDBsum" id="5LZX"/>
<dbReference type="PDBsum" id="5LZY"/>
<dbReference type="PDBsum" id="5LZZ"/>
<dbReference type="PDBsum" id="6D90"/>
<dbReference type="PDBsum" id="6D9J"/>
<dbReference type="PDBsum" id="6FTG"/>
<dbReference type="PDBsum" id="6FTI"/>
<dbReference type="PDBsum" id="6FTJ"/>
<dbReference type="PDBsum" id="6P5I"/>
<dbReference type="PDBsum" id="6P5J"/>
<dbReference type="PDBsum" id="6P5K"/>
<dbReference type="PDBsum" id="6P5N"/>
<dbReference type="PDBsum" id="6R5Q"/>
<dbReference type="PDBsum" id="6R6G"/>
<dbReference type="PDBsum" id="6R6P"/>
<dbReference type="PDBsum" id="6R7Q"/>
<dbReference type="PDBsum" id="7MDZ"/>
<dbReference type="PDBsum" id="7NFX"/>
<dbReference type="PDBsum" id="7NWG"/>
<dbReference type="PDBsum" id="7NWI"/>
<dbReference type="PDBsum" id="7OBR"/>
<dbReference type="PDBsum" id="7QWQ"/>
<dbReference type="PDBsum" id="7QWR"/>
<dbReference type="PDBsum" id="7QWS"/>
<dbReference type="PDBsum" id="7TM3"/>
<dbReference type="PDBsum" id="7TUT"/>
<dbReference type="PDBsum" id="8B5L"/>
<dbReference type="PDBsum" id="8B6C"/>
<dbReference type="PDBsum" id="8BHF"/>
<dbReference type="PDBsum" id="8BPO"/>
<dbReference type="PDBsum" id="8BTK"/>
<dbReference type="PDBsum" id="8RJB"/>
<dbReference type="PDBsum" id="8RJC"/>
<dbReference type="PDBsum" id="8RJD"/>
<dbReference type="PDBsum" id="8SCB"/>
<dbReference type="PDBsum" id="8VFT"/>
<dbReference type="PDBsum" id="9BDL"/>
<dbReference type="PDBsum" id="9BDN"/>
<dbReference type="PDBsum" id="9BDP"/>
<dbReference type="EMDB" id="EMD-0099"/>
<dbReference type="EMDB" id="EMD-0100"/>
<dbReference type="EMDB" id="EMD-0192"/>
<dbReference type="EMDB" id="EMD-0194"/>
<dbReference type="EMDB" id="EMD-0195"/>
<dbReference type="EMDB" id="EMD-0197"/>
<dbReference type="EMDB" id="EMD-10181"/>
<dbReference type="EMDB" id="EMD-10380"/>
<dbReference type="EMDB" id="EMD-12303"/>
<dbReference type="EMDB" id="EMD-12631"/>
<dbReference type="EMDB" id="EMD-12632"/>
<dbReference type="EMDB" id="EMD-12633"/>
<dbReference type="EMDB" id="EMD-12801"/>
<dbReference type="EMDB" id="EMD-14191"/>
<dbReference type="EMDB" id="EMD-14192"/>
<dbReference type="EMDB" id="EMD-14193"/>
<dbReference type="EMDB" id="EMD-15860"/>
<dbReference type="EMDB" id="EMD-15863"/>
<dbReference type="EMDB" id="EMD-16052"/>
<dbReference type="EMDB" id="EMD-16155"/>
<dbReference type="EMDB" id="EMD-16232"/>
<dbReference type="EMDB" id="EMD-19195"/>
<dbReference type="EMDB" id="EMD-19197"/>
<dbReference type="EMDB" id="EMD-19198"/>
<dbReference type="EMDB" id="EMD-20255"/>
<dbReference type="EMDB" id="EMD-20256"/>
<dbReference type="EMDB" id="EMD-20257"/>
<dbReference type="EMDB" id="EMD-20258"/>
<dbReference type="EMDB" id="EMD-23785"/>
<dbReference type="EMDB" id="EMD-25994"/>
<dbReference type="EMDB" id="EMD-26035"/>
<dbReference type="EMDB" id="EMD-26036"/>
<dbReference type="EMDB" id="EMD-26133"/>
<dbReference type="EMDB" id="EMD-40344"/>
<dbReference type="EMDB" id="EMD-4130"/>
<dbReference type="EMDB" id="EMD-4131"/>
<dbReference type="EMDB" id="EMD-4132"/>
<dbReference type="EMDB" id="EMD-4133"/>
<dbReference type="EMDB" id="EMD-4134"/>
<dbReference type="EMDB" id="EMD-4135"/>
<dbReference type="EMDB" id="EMD-4136"/>
<dbReference type="EMDB" id="EMD-4137"/>
<dbReference type="EMDB" id="EMD-4300"/>
<dbReference type="EMDB" id="EMD-4315"/>
<dbReference type="EMDB" id="EMD-4316"/>
<dbReference type="EMDB" id="EMD-4317"/>
<dbReference type="EMDB" id="EMD-43189"/>
<dbReference type="EMDB" id="EMD-44461"/>
<dbReference type="EMDB" id="EMD-44463"/>
<dbReference type="EMDB" id="EMD-44464"/>
<dbReference type="EMDB" id="EMD-4729"/>
<dbReference type="EMDB" id="EMD-4735"/>
<dbReference type="EMDB" id="EMD-4737"/>
<dbReference type="EMDB" id="EMD-4745"/>
<dbReference type="EMDB" id="EMD-7834"/>
<dbReference type="EMDB" id="EMD-7836"/>
<dbReference type="EMDB" id="EMD-9240"/>
<dbReference type="EMDB" id="EMD-9242"/>
<dbReference type="SMR" id="G1STW0"/>
<dbReference type="FunCoup" id="G1STW0">
    <property type="interactions" value="1219"/>
</dbReference>
<dbReference type="IntAct" id="G1STW0">
    <property type="interactions" value="1"/>
</dbReference>
<dbReference type="STRING" id="9986.ENSOCUP00000006762"/>
<dbReference type="PaxDb" id="9986-ENSOCUP00000006762"/>
<dbReference type="Ensembl" id="ENSOCUT00000007822.3">
    <property type="protein sequence ID" value="ENSOCUP00000006762.3"/>
    <property type="gene ID" value="ENSOCUG00000007825.3"/>
</dbReference>
<dbReference type="KEGG" id="ocu:100354898"/>
<dbReference type="CTD" id="6130"/>
<dbReference type="eggNOG" id="KOG3166">
    <property type="taxonomic scope" value="Eukaryota"/>
</dbReference>
<dbReference type="GeneTree" id="ENSGT00940000153294"/>
<dbReference type="HOGENOM" id="CLU_055193_0_1_1"/>
<dbReference type="InParanoid" id="G1STW0"/>
<dbReference type="OrthoDB" id="29563at2759"/>
<dbReference type="TreeFam" id="TF300788"/>
<dbReference type="Proteomes" id="UP000001811">
    <property type="component" value="Unplaced"/>
</dbReference>
<dbReference type="Bgee" id="ENSOCUG00000007825">
    <property type="expression patterns" value="Expressed in uterus and 17 other cell types or tissues"/>
</dbReference>
<dbReference type="GO" id="GO:0005737">
    <property type="term" value="C:cytoplasm"/>
    <property type="evidence" value="ECO:0007669"/>
    <property type="project" value="UniProtKB-SubCell"/>
</dbReference>
<dbReference type="GO" id="GO:1990904">
    <property type="term" value="C:ribonucleoprotein complex"/>
    <property type="evidence" value="ECO:0007669"/>
    <property type="project" value="UniProtKB-KW"/>
</dbReference>
<dbReference type="GO" id="GO:0005840">
    <property type="term" value="C:ribosome"/>
    <property type="evidence" value="ECO:0007669"/>
    <property type="project" value="UniProtKB-KW"/>
</dbReference>
<dbReference type="GO" id="GO:0003723">
    <property type="term" value="F:RNA binding"/>
    <property type="evidence" value="ECO:0007669"/>
    <property type="project" value="InterPro"/>
</dbReference>
<dbReference type="FunFam" id="3.30.1330.30:FF:000003">
    <property type="entry name" value="60S ribosomal protein L7a"/>
    <property type="match status" value="1"/>
</dbReference>
<dbReference type="Gene3D" id="3.30.1330.30">
    <property type="match status" value="1"/>
</dbReference>
<dbReference type="InterPro" id="IPR050257">
    <property type="entry name" value="eL8/uL1-like"/>
</dbReference>
<dbReference type="InterPro" id="IPR029064">
    <property type="entry name" value="Ribosomal_eL30-like_sf"/>
</dbReference>
<dbReference type="InterPro" id="IPR004038">
    <property type="entry name" value="Ribosomal_eL8/eL30/eS12/Gad45"/>
</dbReference>
<dbReference type="InterPro" id="IPR018492">
    <property type="entry name" value="Ribosomal_eL8/Nhp2"/>
</dbReference>
<dbReference type="InterPro" id="IPR001921">
    <property type="entry name" value="Ribosomal_eL8_euk"/>
</dbReference>
<dbReference type="PANTHER" id="PTHR23105">
    <property type="entry name" value="RIBOSOMAL PROTEIN L7AE FAMILY MEMBER"/>
    <property type="match status" value="1"/>
</dbReference>
<dbReference type="Pfam" id="PF01248">
    <property type="entry name" value="Ribosomal_L7Ae"/>
    <property type="match status" value="1"/>
</dbReference>
<dbReference type="PRINTS" id="PR00881">
    <property type="entry name" value="L7ARS6FAMILY"/>
</dbReference>
<dbReference type="PRINTS" id="PR00882">
    <property type="entry name" value="RIBOSOMALL7A"/>
</dbReference>
<dbReference type="SUPFAM" id="SSF55315">
    <property type="entry name" value="L30e-like"/>
    <property type="match status" value="1"/>
</dbReference>
<evidence type="ECO:0000250" key="1">
    <source>
        <dbReference type="UniProtKB" id="P12970"/>
    </source>
</evidence>
<evidence type="ECO:0000250" key="2">
    <source>
        <dbReference type="UniProtKB" id="P62424"/>
    </source>
</evidence>
<evidence type="ECO:0000255" key="3">
    <source>
        <dbReference type="RuleBase" id="RU367042"/>
    </source>
</evidence>
<evidence type="ECO:0000269" key="4">
    <source>
    </source>
</evidence>
<evidence type="ECO:0000269" key="5">
    <source>
    </source>
</evidence>
<evidence type="ECO:0000269" key="6">
    <source>
    </source>
</evidence>
<evidence type="ECO:0000269" key="7">
    <source>
    </source>
</evidence>
<evidence type="ECO:0000269" key="8">
    <source>
    </source>
</evidence>
<evidence type="ECO:0000305" key="9"/>
<evidence type="ECO:0007744" key="10">
    <source>
        <dbReference type="PDB" id="3JAG"/>
    </source>
</evidence>
<evidence type="ECO:0007744" key="11">
    <source>
        <dbReference type="PDB" id="3JAH"/>
    </source>
</evidence>
<evidence type="ECO:0007744" key="12">
    <source>
        <dbReference type="PDB" id="5LZS"/>
    </source>
</evidence>
<evidence type="ECO:0007744" key="13">
    <source>
        <dbReference type="PDB" id="5LZT"/>
    </source>
</evidence>
<evidence type="ECO:0007744" key="14">
    <source>
        <dbReference type="PDB" id="6D90"/>
    </source>
</evidence>
<evidence type="ECO:0007744" key="15">
    <source>
        <dbReference type="PDB" id="6D9J"/>
    </source>
</evidence>
<evidence type="ECO:0007744" key="16">
    <source>
        <dbReference type="PDB" id="6P5I"/>
    </source>
</evidence>
<evidence type="ECO:0007744" key="17">
    <source>
        <dbReference type="PDB" id="6P5J"/>
    </source>
</evidence>
<evidence type="ECO:0007744" key="18">
    <source>
        <dbReference type="PDB" id="6R5Q"/>
    </source>
</evidence>
<evidence type="ECO:0007744" key="19">
    <source>
        <dbReference type="PDB" id="6R6G"/>
    </source>
</evidence>
<accession>G1STW0</accession>
<protein>
    <recommendedName>
        <fullName>Large ribosomal subunit protein eL8</fullName>
    </recommendedName>
    <alternativeName>
        <fullName evidence="3">60S ribosomal protein L7a</fullName>
    </alternativeName>
</protein>
<proteinExistence type="evidence at protein level"/>